<name>AC4CH_SHEB9</name>
<sequence>MLLNKITFFERFEHDILSGAKTITLRDEAESHVIVGQILPVSTFETERWFCDIQIIDVTPVKLTELTEVHAKQENMTLPQLRDVIAEIYPGLEQLFMIRFRILSQ</sequence>
<protein>
    <recommendedName>
        <fullName evidence="2">N(4)-acetylcytidine amidohydrolase</fullName>
        <shortName evidence="2">ac4C amidohydrolase</shortName>
        <ecNumber evidence="2">3.5.1.135</ecNumber>
    </recommendedName>
</protein>
<dbReference type="EC" id="3.5.1.135" evidence="2"/>
<dbReference type="EMBL" id="CP000891">
    <property type="protein sequence ID" value="ABX49805.1"/>
    <property type="molecule type" value="Genomic_DNA"/>
</dbReference>
<dbReference type="SMR" id="A9L543"/>
<dbReference type="KEGG" id="sbn:Sbal195_2637"/>
<dbReference type="HOGENOM" id="CLU_152586_0_0_6"/>
<dbReference type="Proteomes" id="UP000000770">
    <property type="component" value="Chromosome"/>
</dbReference>
<dbReference type="GO" id="GO:0005829">
    <property type="term" value="C:cytosol"/>
    <property type="evidence" value="ECO:0007669"/>
    <property type="project" value="TreeGrafter"/>
</dbReference>
<dbReference type="GO" id="GO:0016813">
    <property type="term" value="F:hydrolase activity, acting on carbon-nitrogen (but not peptide) bonds, in linear amidines"/>
    <property type="evidence" value="ECO:0007669"/>
    <property type="project" value="UniProtKB-UniRule"/>
</dbReference>
<dbReference type="GO" id="GO:0106251">
    <property type="term" value="F:N4-acetylcytidine amidohydrolase activity"/>
    <property type="evidence" value="ECO:0007669"/>
    <property type="project" value="RHEA"/>
</dbReference>
<dbReference type="CDD" id="cd06552">
    <property type="entry name" value="ASCH_yqfb_like"/>
    <property type="match status" value="1"/>
</dbReference>
<dbReference type="Gene3D" id="2.30.130.30">
    <property type="entry name" value="Hypothetical protein"/>
    <property type="match status" value="1"/>
</dbReference>
<dbReference type="HAMAP" id="MF_00684">
    <property type="entry name" value="ac4C_amidohydr"/>
    <property type="match status" value="1"/>
</dbReference>
<dbReference type="InterPro" id="IPR008314">
    <property type="entry name" value="AC4CH"/>
</dbReference>
<dbReference type="InterPro" id="IPR007374">
    <property type="entry name" value="ASCH_domain"/>
</dbReference>
<dbReference type="InterPro" id="IPR015947">
    <property type="entry name" value="PUA-like_sf"/>
</dbReference>
<dbReference type="NCBIfam" id="NF003443">
    <property type="entry name" value="PRK04980.1"/>
    <property type="match status" value="1"/>
</dbReference>
<dbReference type="PANTHER" id="PTHR38088">
    <property type="entry name" value="UCP029143 FAMILY PROTEIN"/>
    <property type="match status" value="1"/>
</dbReference>
<dbReference type="PANTHER" id="PTHR38088:SF2">
    <property type="entry name" value="UCP029143 FAMILY PROTEIN"/>
    <property type="match status" value="1"/>
</dbReference>
<dbReference type="Pfam" id="PF04266">
    <property type="entry name" value="ASCH"/>
    <property type="match status" value="1"/>
</dbReference>
<dbReference type="PIRSF" id="PIRSF029143">
    <property type="entry name" value="UCP029143"/>
    <property type="match status" value="1"/>
</dbReference>
<dbReference type="SMART" id="SM01022">
    <property type="entry name" value="ASCH"/>
    <property type="match status" value="1"/>
</dbReference>
<dbReference type="SUPFAM" id="SSF88697">
    <property type="entry name" value="PUA domain-like"/>
    <property type="match status" value="1"/>
</dbReference>
<organism>
    <name type="scientific">Shewanella baltica (strain OS195)</name>
    <dbReference type="NCBI Taxonomy" id="399599"/>
    <lineage>
        <taxon>Bacteria</taxon>
        <taxon>Pseudomonadati</taxon>
        <taxon>Pseudomonadota</taxon>
        <taxon>Gammaproteobacteria</taxon>
        <taxon>Alteromonadales</taxon>
        <taxon>Shewanellaceae</taxon>
        <taxon>Shewanella</taxon>
    </lineage>
</organism>
<proteinExistence type="inferred from homology"/>
<gene>
    <name type="ordered locus">Sbal195_2637</name>
</gene>
<keyword id="KW-0378">Hydrolase</keyword>
<comment type="function">
    <text evidence="2">Catalyzes the hydrolysis of N(4)-acetylcytidine (ac4C).</text>
</comment>
<comment type="catalytic activity">
    <reaction evidence="2">
        <text>N(4)-acetylcytidine + H2O = cytidine + acetate + H(+)</text>
        <dbReference type="Rhea" id="RHEA:62932"/>
        <dbReference type="ChEBI" id="CHEBI:15377"/>
        <dbReference type="ChEBI" id="CHEBI:15378"/>
        <dbReference type="ChEBI" id="CHEBI:17562"/>
        <dbReference type="ChEBI" id="CHEBI:30089"/>
        <dbReference type="ChEBI" id="CHEBI:70989"/>
        <dbReference type="EC" id="3.5.1.135"/>
    </reaction>
</comment>
<comment type="catalytic activity">
    <reaction evidence="2">
        <text>N(4)-acetyl-2'-deoxycytidine + H2O = 2'-deoxycytidine + acetate + H(+)</text>
        <dbReference type="Rhea" id="RHEA:62936"/>
        <dbReference type="ChEBI" id="CHEBI:15377"/>
        <dbReference type="ChEBI" id="CHEBI:15378"/>
        <dbReference type="ChEBI" id="CHEBI:15698"/>
        <dbReference type="ChEBI" id="CHEBI:30089"/>
        <dbReference type="ChEBI" id="CHEBI:146133"/>
        <dbReference type="EC" id="3.5.1.135"/>
    </reaction>
</comment>
<comment type="catalytic activity">
    <reaction evidence="2">
        <text>N(4)-acetylcytosine + H2O = cytosine + acetate + H(+)</text>
        <dbReference type="Rhea" id="RHEA:62940"/>
        <dbReference type="ChEBI" id="CHEBI:15377"/>
        <dbReference type="ChEBI" id="CHEBI:15378"/>
        <dbReference type="ChEBI" id="CHEBI:16040"/>
        <dbReference type="ChEBI" id="CHEBI:30089"/>
        <dbReference type="ChEBI" id="CHEBI:146134"/>
        <dbReference type="EC" id="3.5.1.135"/>
    </reaction>
</comment>
<comment type="similarity">
    <text evidence="2">Belongs to the N(4)-acetylcytidine amidohydrolase family.</text>
</comment>
<evidence type="ECO:0000255" key="1"/>
<evidence type="ECO:0000255" key="2">
    <source>
        <dbReference type="HAMAP-Rule" id="MF_00684"/>
    </source>
</evidence>
<reference key="1">
    <citation type="submission" date="2007-11" db="EMBL/GenBank/DDBJ databases">
        <title>Complete sequence of chromosome of Shewanella baltica OS195.</title>
        <authorList>
            <consortium name="US DOE Joint Genome Institute"/>
            <person name="Copeland A."/>
            <person name="Lucas S."/>
            <person name="Lapidus A."/>
            <person name="Barry K."/>
            <person name="Glavina del Rio T."/>
            <person name="Dalin E."/>
            <person name="Tice H."/>
            <person name="Pitluck S."/>
            <person name="Chain P."/>
            <person name="Malfatti S."/>
            <person name="Shin M."/>
            <person name="Vergez L."/>
            <person name="Schmutz J."/>
            <person name="Larimer F."/>
            <person name="Land M."/>
            <person name="Hauser L."/>
            <person name="Kyrpides N."/>
            <person name="Kim E."/>
            <person name="Brettar I."/>
            <person name="Rodrigues J."/>
            <person name="Konstantinidis K."/>
            <person name="Klappenbach J."/>
            <person name="Hofle M."/>
            <person name="Tiedje J."/>
            <person name="Richardson P."/>
        </authorList>
    </citation>
    <scope>NUCLEOTIDE SEQUENCE [LARGE SCALE GENOMIC DNA]</scope>
    <source>
        <strain>OS195</strain>
    </source>
</reference>
<accession>A9L543</accession>
<feature type="chain" id="PRO_1000083064" description="N(4)-acetylcytidine amidohydrolase">
    <location>
        <begin position="1"/>
        <end position="105"/>
    </location>
</feature>
<feature type="domain" description="ASCH" evidence="1">
    <location>
        <begin position="7"/>
        <end position="93"/>
    </location>
</feature>
<feature type="active site" description="Proton acceptor" evidence="2">
    <location>
        <position position="21"/>
    </location>
</feature>
<feature type="active site" description="Nucleophile" evidence="2">
    <location>
        <position position="24"/>
    </location>
</feature>
<feature type="active site" description="Proton donor" evidence="2">
    <location>
        <position position="74"/>
    </location>
</feature>